<reference key="1">
    <citation type="journal article" date="2009" name="PLoS Biol.">
        <title>Lineage-specific biology revealed by a finished genome assembly of the mouse.</title>
        <authorList>
            <person name="Church D.M."/>
            <person name="Goodstadt L."/>
            <person name="Hillier L.W."/>
            <person name="Zody M.C."/>
            <person name="Goldstein S."/>
            <person name="She X."/>
            <person name="Bult C.J."/>
            <person name="Agarwala R."/>
            <person name="Cherry J.L."/>
            <person name="DiCuccio M."/>
            <person name="Hlavina W."/>
            <person name="Kapustin Y."/>
            <person name="Meric P."/>
            <person name="Maglott D."/>
            <person name="Birtle Z."/>
            <person name="Marques A.C."/>
            <person name="Graves T."/>
            <person name="Zhou S."/>
            <person name="Teague B."/>
            <person name="Potamousis K."/>
            <person name="Churas C."/>
            <person name="Place M."/>
            <person name="Herschleb J."/>
            <person name="Runnheim R."/>
            <person name="Forrest D."/>
            <person name="Amos-Landgraf J."/>
            <person name="Schwartz D.C."/>
            <person name="Cheng Z."/>
            <person name="Lindblad-Toh K."/>
            <person name="Eichler E.E."/>
            <person name="Ponting C.P."/>
        </authorList>
    </citation>
    <scope>NUCLEOTIDE SEQUENCE [LARGE SCALE GENOMIC DNA]</scope>
    <source>
        <strain>C57BL/6J</strain>
    </source>
</reference>
<reference key="2">
    <citation type="journal article" date="2009" name="J. Cell Biol.">
        <title>Mammalian Fat and Dachsous cadherins regulate apical membrane organization in the embryonic cerebral cortex.</title>
        <authorList>
            <person name="Ishiuchi T."/>
            <person name="Misaki K."/>
            <person name="Yonemura S."/>
            <person name="Takeichi M."/>
            <person name="Tanoue T."/>
        </authorList>
    </citation>
    <scope>SUBCELLULAR LOCATION</scope>
    <scope>HETEROPHILIC INTERACTION WITH FAT4</scope>
</reference>
<reference key="3">
    <citation type="journal article" date="2010" name="Cell">
        <title>A tissue-specific atlas of mouse protein phosphorylation and expression.</title>
        <authorList>
            <person name="Huttlin E.L."/>
            <person name="Jedrychowski M.P."/>
            <person name="Elias J.E."/>
            <person name="Goswami T."/>
            <person name="Rad R."/>
            <person name="Beausoleil S.A."/>
            <person name="Villen J."/>
            <person name="Haas W."/>
            <person name="Sowa M.E."/>
            <person name="Gygi S.P."/>
        </authorList>
    </citation>
    <scope>PHOSPHORYLATION [LARGE SCALE ANALYSIS] AT SER-3048</scope>
    <scope>IDENTIFICATION BY MASS SPECTROMETRY [LARGE SCALE ANALYSIS]</scope>
    <source>
        <tissue>Heart</tissue>
        <tissue>Kidney</tissue>
        <tissue>Lung</tissue>
        <tissue>Spleen</tissue>
    </source>
</reference>
<reference key="4">
    <citation type="journal article" date="2011" name="Development">
        <title>Characterization of a Dchs1 mutant mouse reveals requirements for Dchs1-Fat4 signaling during mammalian development.</title>
        <authorList>
            <person name="Mao Y."/>
            <person name="Mulvaney J."/>
            <person name="Zakaria S."/>
            <person name="Yu T."/>
            <person name="Morgan K.M."/>
            <person name="Allen S."/>
            <person name="Basson M.A."/>
            <person name="Francis-West P."/>
            <person name="Irvine K.D."/>
        </authorList>
    </citation>
    <scope>DISRUPTION PHENOTYPE</scope>
</reference>
<reference key="5">
    <citation type="journal article" date="2013" name="Nat. Genet.">
        <title>Mutations in genes encoding the cadherin receptor-ligand pair DCHS1 and FAT4 disrupt cerebral cortical development.</title>
        <authorList>
            <person name="Cappello S."/>
            <person name="Gray M.J."/>
            <person name="Badouel C."/>
            <person name="Lange S."/>
            <person name="Einsiedler M."/>
            <person name="Srour M."/>
            <person name="Chitayat D."/>
            <person name="Hamdan F.F."/>
            <person name="Jenkins Z.A."/>
            <person name="Morgan T."/>
            <person name="Preitner N."/>
            <person name="Uster T."/>
            <person name="Thomas J."/>
            <person name="Shannon P."/>
            <person name="Morrison V."/>
            <person name="Di Donato N."/>
            <person name="Van Maldergem L."/>
            <person name="Neuhann T."/>
            <person name="Newbury-Ecob R."/>
            <person name="Swinkells M."/>
            <person name="Terhal P."/>
            <person name="Wilson L.C."/>
            <person name="Zwijnenburg P.J."/>
            <person name="Sutherland-Smith A.J."/>
            <person name="Black M.A."/>
            <person name="Markie D."/>
            <person name="Michaud J.L."/>
            <person name="Simpson M.A."/>
            <person name="Mansour S."/>
            <person name="McNeill H."/>
            <person name="Goetz M."/>
            <person name="Robertson S.P."/>
        </authorList>
    </citation>
    <scope>FUNCTION</scope>
    <scope>DEVELOPMENTAL STAGE</scope>
</reference>
<reference key="6">
    <citation type="journal article" date="2015" name="Nature">
        <title>Mutations in DCHS1 cause mitral valve prolapse.</title>
        <authorList>
            <person name="Durst R."/>
            <person name="Sauls K."/>
            <person name="Peal D.S."/>
            <person name="deVlaming A."/>
            <person name="Toomer K."/>
            <person name="Leyne M."/>
            <person name="Salani M."/>
            <person name="Talkowski M.E."/>
            <person name="Brand H."/>
            <person name="Perrocheau M."/>
            <person name="Simpson C."/>
            <person name="Jett C."/>
            <person name="Stone M.R."/>
            <person name="Charles F."/>
            <person name="Chiang C."/>
            <person name="Lynch S.N."/>
            <person name="Bouatia-Naji N."/>
            <person name="Delling F.N."/>
            <person name="Freed L.A."/>
            <person name="Tribouilloy C."/>
            <person name="Le Tourneau T."/>
            <person name="LeMarec H."/>
            <person name="Fernandez-Friera L."/>
            <person name="Solis J."/>
            <person name="Trujillano D."/>
            <person name="Ossowski S."/>
            <person name="Estivill X."/>
            <person name="Dina C."/>
            <person name="Bruneval P."/>
            <person name="Chester A."/>
            <person name="Schott J.J."/>
            <person name="Irvine K.D."/>
            <person name="Mao Y."/>
            <person name="Wessels A."/>
            <person name="Motiwala T."/>
            <person name="Puceat M."/>
            <person name="Tsukasaki Y."/>
            <person name="Menick D.R."/>
            <person name="Kasiganesan H."/>
            <person name="Nie X."/>
            <person name="Broome A.M."/>
            <person name="Williams K."/>
            <person name="Johnson A."/>
            <person name="Markwald R.R."/>
            <person name="Jeunemaitre X."/>
            <person name="Hagege A."/>
            <person name="Levine R.A."/>
            <person name="Milan D.J."/>
            <person name="Norris R.A."/>
            <person name="Slaugenhaupt S.A."/>
        </authorList>
    </citation>
    <scope>FUNCTION</scope>
    <scope>DISRUPTION PHENOTYPE</scope>
    <scope>TISSUE SPECIFICITY</scope>
    <scope>DEVELOPMENTAL STAGE</scope>
</reference>
<feature type="signal peptide" evidence="2">
    <location>
        <begin position="1"/>
        <end position="35"/>
    </location>
</feature>
<feature type="chain" id="PRO_0000429045" description="Protocadherin-16">
    <location>
        <begin position="36"/>
        <end position="3291"/>
    </location>
</feature>
<feature type="topological domain" description="Extracellular" evidence="2">
    <location>
        <begin position="36"/>
        <end position="2933"/>
    </location>
</feature>
<feature type="transmembrane region" description="Helical" evidence="2">
    <location>
        <begin position="2934"/>
        <end position="2954"/>
    </location>
</feature>
<feature type="topological domain" description="Cytoplasmic" evidence="2">
    <location>
        <begin position="2955"/>
        <end position="3291"/>
    </location>
</feature>
<feature type="domain" description="Cadherin 1" evidence="3">
    <location>
        <begin position="37"/>
        <end position="137"/>
    </location>
</feature>
<feature type="domain" description="Cadherin 2" evidence="3">
    <location>
        <begin position="138"/>
        <end position="249"/>
    </location>
</feature>
<feature type="domain" description="Cadherin 3" evidence="3">
    <location>
        <begin position="250"/>
        <end position="356"/>
    </location>
</feature>
<feature type="domain" description="Cadherin 4" evidence="3">
    <location>
        <begin position="369"/>
        <end position="466"/>
    </location>
</feature>
<feature type="domain" description="Cadherin 5" evidence="3">
    <location>
        <begin position="476"/>
        <end position="572"/>
    </location>
</feature>
<feature type="domain" description="Cadherin 6" evidence="3">
    <location>
        <begin position="573"/>
        <end position="679"/>
    </location>
</feature>
<feature type="domain" description="Cadherin 7" evidence="3">
    <location>
        <begin position="680"/>
        <end position="784"/>
    </location>
</feature>
<feature type="domain" description="Cadherin 8" evidence="3">
    <location>
        <begin position="785"/>
        <end position="888"/>
    </location>
</feature>
<feature type="domain" description="Cadherin 9" evidence="3">
    <location>
        <begin position="889"/>
        <end position="994"/>
    </location>
</feature>
<feature type="domain" description="Cadherin 10" evidence="3">
    <location>
        <begin position="995"/>
        <end position="1105"/>
    </location>
</feature>
<feature type="domain" description="Cadherin 11" evidence="3">
    <location>
        <begin position="1100"/>
        <end position="1205"/>
    </location>
</feature>
<feature type="domain" description="Cadherin 12" evidence="3">
    <location>
        <begin position="1218"/>
        <end position="1317"/>
    </location>
</feature>
<feature type="domain" description="Cadherin 13" evidence="3">
    <location>
        <begin position="1326"/>
        <end position="1429"/>
    </location>
</feature>
<feature type="domain" description="Cadherin 14" evidence="3">
    <location>
        <begin position="1430"/>
        <end position="1539"/>
    </location>
</feature>
<feature type="domain" description="Cadherin 15" evidence="3">
    <location>
        <begin position="1539"/>
        <end position="1642"/>
    </location>
</feature>
<feature type="domain" description="Cadherin 16" evidence="3">
    <location>
        <begin position="1643"/>
        <end position="1744"/>
    </location>
</feature>
<feature type="domain" description="Cadherin 17" evidence="3">
    <location>
        <begin position="1745"/>
        <end position="1848"/>
    </location>
</feature>
<feature type="domain" description="Cadherin 18" evidence="3">
    <location>
        <begin position="1849"/>
        <end position="1953"/>
    </location>
</feature>
<feature type="domain" description="Cadherin 19" evidence="3">
    <location>
        <begin position="1976"/>
        <end position="2061"/>
    </location>
</feature>
<feature type="domain" description="Cadherin 20" evidence="3">
    <location>
        <begin position="2062"/>
        <end position="2164"/>
    </location>
</feature>
<feature type="domain" description="Cadherin 21" evidence="3">
    <location>
        <begin position="2165"/>
        <end position="2270"/>
    </location>
</feature>
<feature type="domain" description="Cadherin 22" evidence="3">
    <location>
        <begin position="2270"/>
        <end position="2369"/>
    </location>
</feature>
<feature type="domain" description="Cadherin 23" evidence="3">
    <location>
        <begin position="2370"/>
        <end position="2475"/>
    </location>
</feature>
<feature type="domain" description="Cadherin 24" evidence="3">
    <location>
        <begin position="2476"/>
        <end position="2595"/>
    </location>
</feature>
<feature type="domain" description="Cadherin 25" evidence="3">
    <location>
        <begin position="2596"/>
        <end position="2699"/>
    </location>
</feature>
<feature type="domain" description="Cadherin 26" evidence="3">
    <location>
        <begin position="2700"/>
        <end position="2806"/>
    </location>
</feature>
<feature type="domain" description="Cadherin 27" evidence="3">
    <location>
        <begin position="2807"/>
        <end position="2926"/>
    </location>
</feature>
<feature type="region of interest" description="Disordered" evidence="4">
    <location>
        <begin position="2867"/>
        <end position="2886"/>
    </location>
</feature>
<feature type="region of interest" description="Disordered" evidence="4">
    <location>
        <begin position="2978"/>
        <end position="3033"/>
    </location>
</feature>
<feature type="region of interest" description="Disordered" evidence="4">
    <location>
        <begin position="3051"/>
        <end position="3081"/>
    </location>
</feature>
<feature type="region of interest" description="Disordered" evidence="4">
    <location>
        <begin position="3226"/>
        <end position="3291"/>
    </location>
</feature>
<feature type="compositionally biased region" description="Gly residues" evidence="4">
    <location>
        <begin position="3004"/>
        <end position="3013"/>
    </location>
</feature>
<feature type="compositionally biased region" description="Low complexity" evidence="4">
    <location>
        <begin position="3237"/>
        <end position="3259"/>
    </location>
</feature>
<feature type="compositionally biased region" description="Polar residues" evidence="4">
    <location>
        <begin position="3270"/>
        <end position="3279"/>
    </location>
</feature>
<feature type="modified residue" description="Phosphoserine" evidence="9">
    <location>
        <position position="3048"/>
    </location>
</feature>
<feature type="glycosylation site" description="N-linked (GlcNAc...) asparagine" evidence="2">
    <location>
        <position position="396"/>
    </location>
</feature>
<feature type="glycosylation site" description="N-linked (GlcNAc...) asparagine" evidence="2">
    <location>
        <position position="2354"/>
    </location>
</feature>
<comment type="function">
    <text evidence="7 8">Calcium-dependent cell-adhesion protein. Mediates functions in neuroprogenitor cell proliferation and differentiation. In the heart, has a critical role for proper morphogenesis of the mitral valve, acting in the regulation of cell migration involved in valve formation (PubMed:26258302).</text>
</comment>
<comment type="subunit">
    <text>Heterophilic interaction with FAT4; this interaction affects their respective protein levels.</text>
</comment>
<comment type="subcellular location">
    <subcellularLocation>
        <location evidence="1">Cell membrane</location>
        <topology evidence="1">Single-pass type I membrane protein</topology>
    </subcellularLocation>
    <text evidence="5">In the embryonic cortex, FAT4 and DCHS1 accumulated at the cell-cell boundaries located apical to the adherens junction.</text>
</comment>
<comment type="tissue specificity">
    <text evidence="8">Expressed in the epicardium and atrioventricular sulcus (at protein level).</text>
</comment>
<comment type="developmental stage">
    <text evidence="7 8">Expressed in all layers of the developing brain, with expression being most prominent at the ventricular margin. Expressed throughout cardiac development in the endothelial cells and interstitial cells of the developing valves (at protein level). Expression is observed in the endocardium and mesenchyme of the superior and inferior cushions at day 11.5 dpc. At days 13.5 dpc and 15.5 dpc, expression is observed in the forming anterior and posterior mitral leaflets (PubMed:26258302).</text>
</comment>
<comment type="disruption phenotype">
    <text evidence="6 8">Deficient mice exhibit postnatal lethality, growth retardation, small lungs, abnormal cochlea morphology, abnormal kidney morphology, cardiovascular abnormalities and skeletal abnormalities. DCHS1 and FAT4 single mutants and DCHS1/FAT4 double mutants have similar phenotypes. Heterozygous mice lacking one DCHS1 allele exhibit mitral valve prolapse with posterior leaflet elongation, leaflet thickening, and myxomatous degeneration with increased proteoglycan accumulation in both mitral leaflets (PubMed:26258302).</text>
</comment>
<sequence length="3291" mass="346384">MQKELSVALSCPGMKSLRTLLPLLVLLGATVPGSWGQAGSLDLQIDEEQPAGTLIGDISAGLPPGTAPPPMYFISAQEGSGVGTDLAIDEHSGVVRTARVLDRERRDRYRFTAVTPDGATVEVTVRVADINDHAPAFPQARAALQIPEHTALGTRYPLEPARDADAGRLGTQGYALSGDGAGETFRLETRPGPGGAPVPELVIAGELDRENRSHYMLQLEAYDGGSPPRRAQALLDVTLLDINDHAPAFNQSRYHAVVSESLAPGSPVLQVFASDADAGANGAVTYEINRRQSEGDGPFSIDAHTGFLRLERPLDFEQRRVHELVVQARDGGAHPELGSAFVTVHVRDANDNQPSMTVIFLSADGSPRVSEAAPPGQLVARISVSDPDDGDFAHVNVSLEGGEGHFALSTQDSVIYLVCVARRLDREERDVYNLRVTATDSGSPPLRAEAAFVLHVTDVNDNAPAFDRQLYRPEPLPEVALPGSFVVRVTARDPDQGTNGQITYSLAPGTHTHWFSIDPTSGIITTAATLDYELEPQPQLIVVATDGGLPPLVSSATVSVALQDVNDNEPQFQRTFYNASLPEGTQPGTCFLQVTATDADSGPFGLLSYSLGAGLGASGSPPFRIDAHSGDVCTTRTLDRDQGPSSFDFTVTAIDGGGLKSMVYVKVFVADENDNPPQFYPREYAASLSAQSTPGTAVLRVHAHDPDQGPHGRLSYHILAGNSPPLFALDAHSGLLTVAWPLGRRANSVVQLEIGAQDGGGLQAEPIARVNISIVPGTPTPPIFEQLQYVFSVPEDVAPGTSVGIIQAHNPPGRLGPVTLTLSGGDPRGLFSLDSPSGLLKTLRPLDRELLGPVLELEVRAGSGTPPVFAVARIRVLLDDVNDNSPAFPAPEDTVLLPQNTAPGTPIYTLRALDPDSGANSRITFNLLAGGDGLFTVDPTTGHVRLMGPLGPPGGPAHELEVEARDGGSPPRTSHFRLRVVIQDLGIHGLAPRFDSPTYRVDLPSGTTTGTQILQVQAQAPDGSPVTYHLAADGASSPFGLESQSGWLWVRTALDRESQELYTLKVMAVSGSKAELGQQTGTATVRVIILNQNDHSPRLSEEPTFLAVAENQPPGTSVGRVFATDRDSGPNGRLTYSLQQLSEDSKAFRIHPQTGEVTTLQTLDREQQSSFQLLVQVQDGGSPPRSATGTVHVAVLDLNDNSPTFLQASGAAGGGLPIQVPDRVPPGTLVTTLQAKDPDEGENGTILYTLTGPGSELFSLHPHTGELHTAASLVRAERPHYVLTLSAHDQGSPPRSASLQLLVQVLPSTRVVESPDLIEADSAATVPVVLTVTAAEGLRPGSLLGSVAPQEPASVGVLTYTLVGGADPEGTFALDSASGRLYLARPLDFEAGPAWRALTVRAEGPGGAGARLLRVQVRVQDENEHAPTFARDPLALALPENPDPGATLYTFRASDADGPGPNSEVRYRLLRQEPPVPALRLDARTGALSAPRGLDRETTPALLLLVEATDRPANASRRRAARVSARVFVTDENDNAPVFASPSRVRLPEDQPPGPAALHVVARDPDLGEAARVSYRLAAGGDGHFRLHATTGALSVVRPLDREQRAEHVLTVVALDHGSPPRSSTQLLTVSVVDVNDEAPAFPQQEYNVILRENSPPGTSLLTLKATDPDLGANGQVTYGGVSGESFSLDPNTGVLTTLRALDREEQEEIYLTVYARDRGLPPLLTHITVRVTVEDENDHTPTFGNTHLSLEVPEGQDPQTLTTLRASDPDGGLNGQLQYRILDGDSSGAFALDLTSGEFGTMRPLDREVEPAFQLQIEARDGGQPALSATLLVTVTVLDANDHAPVFPVPSYSVEVPEDAPVGTLLLQLQAHDPDDGDNGRVMYYLGAGTAGAFLLEPTSGELSTATALDREHCASYAFSVTAVDGAAAGPLSTTVPITITVRDVNDHAPAFPTSPLRLRLPRPGPSLNKPTLALATLRAEDRDAGANASILYRLAGTPPPGTTVDSYTGEIRVARSPVALGPQDRVLFIVATDLGRPARSATGVVVVGIQGEPERGPRFPRTSSEAVLRENAPPGTPVISPKAVHSGGSNGPITYSILSGNERGIFSIQPSTGAITVRSAEGLDFETSPRLRLVLQAESGGAFAFSVLTLTLQDANDNAPRFLRPHYVAFLPESRPLEGPLLQVEADDLDQGSGGQISYSLAASQPARGLFHVDPATGTITTTAILDREIWAETRLVLMATDRGSPALVGSATLTVMVIDTNDNRPTIPQPWELRVSEDALLGSEIAQVTGNDVDSGPVLWYVLSPSGPQDPFSIGRYGGRVSLTGPLDFEQCDHYHLQLLAHDGPHEGHANLTVLVEDVNDNVPTFSQSLYQVMMLEHTPPGSAILSVSATDRDSGANGHISYHLASPAEGFRVDPNNGTLFTTVGAMALGHEGPGVVDVVLEARDHGAPGRTAQATVHVQLKDQNDHAPSFTLPHYRVAVSEDLPPGSTLLTLEATDADGSRTHATVDYSIISGNRGRVFQLEPRLAEVGDGVGPGPQALGCLVLLEPLDFESLTQYNLTVAAADRGQPPRSSAVPVTVTVLDVNDNPPVFTRASYRVTVPEDMPVGAELLHVEASDADPGPHGLVHFTLSSGDPLGLFELDENSGALRLSRPLDCETQAQHQLVVQAADPAGTHFSLVPVTVEVQDVNDHGPAFPLSLLSTSLAENQPPGTLVTTLHAIDGDAGTFGRLRYSLLEAVPGPEGREAFSLNSSTGELRARVPFDYEHTGSFRLLVGAADAGNLSASVTVSVLITGEDEYDPVFLAPSFHFQVPEGAQRGHSLGHVQATDEDGGADGLVLYSLATSSPYFGINQTTGALYLRVDSRAPGSGTTTSGGGGRTRREAPRELRLEVVARGPLPGSRSATVPVTVDITHTALGLAPDLNLLLVGAVAASLGVVVVLALAALVLGLVRARSRKAEAAPGPMSQTAPIASSSLQKLGREPPSPPPSEHLYHQTLPSYGGPGAGGPYPRGGSLDPSHSSGRGSAEAAEDDEIRMINEFPRVASVASSLAARGPDSGIQQDADGLSDTSCEPPAPDTWYKGRKAGLLLPGAGATLYREEGPPATATAFLGGCGLSPAPAGDYGFPADGKPCVAGALTAIVAGEEELRGSYNWDYLLSWCPQFQPLASVFTEIARLKDEARPCPPAPRIDPPPLITAVAHPGAKSVPPKPASTAVARAIFPPASHRSPISHEGSLSSAAMSPSFSPSLSPLAARSPVVSPFGVAQGPSASALSTESGLEPPDDTELRI</sequence>
<name>PCD16_MOUSE</name>
<accession>E9PVD3</accession>
<proteinExistence type="evidence at protein level"/>
<keyword id="KW-0106">Calcium</keyword>
<keyword id="KW-0130">Cell adhesion</keyword>
<keyword id="KW-1003">Cell membrane</keyword>
<keyword id="KW-0325">Glycoprotein</keyword>
<keyword id="KW-0472">Membrane</keyword>
<keyword id="KW-0597">Phosphoprotein</keyword>
<keyword id="KW-1185">Reference proteome</keyword>
<keyword id="KW-0677">Repeat</keyword>
<keyword id="KW-0732">Signal</keyword>
<keyword id="KW-0812">Transmembrane</keyword>
<keyword id="KW-1133">Transmembrane helix</keyword>
<dbReference type="EMBL" id="AC121823">
    <property type="status" value="NOT_ANNOTATED_CDS"/>
    <property type="molecule type" value="Genomic_DNA"/>
</dbReference>
<dbReference type="CCDS" id="CCDS52351.1"/>
<dbReference type="RefSeq" id="NP_001156415.1">
    <property type="nucleotide sequence ID" value="NM_001162943.1"/>
</dbReference>
<dbReference type="RefSeq" id="XP_030098358.1">
    <property type="nucleotide sequence ID" value="XM_030242498.2"/>
</dbReference>
<dbReference type="SMR" id="E9PVD3"/>
<dbReference type="BioGRID" id="231434">
    <property type="interactions" value="3"/>
</dbReference>
<dbReference type="FunCoup" id="E9PVD3">
    <property type="interactions" value="40"/>
</dbReference>
<dbReference type="IntAct" id="E9PVD3">
    <property type="interactions" value="2"/>
</dbReference>
<dbReference type="MINT" id="E9PVD3"/>
<dbReference type="STRING" id="10090.ENSMUSP00000077574"/>
<dbReference type="GlyConnect" id="2648">
    <property type="glycosylation" value="3 N-Linked glycans (2 sites)"/>
</dbReference>
<dbReference type="GlyCosmos" id="E9PVD3">
    <property type="glycosylation" value="4 sites, 3 glycans"/>
</dbReference>
<dbReference type="GlyGen" id="E9PVD3">
    <property type="glycosylation" value="10 sites, 6 N-linked glycans (5 sites)"/>
</dbReference>
<dbReference type="iPTMnet" id="E9PVD3"/>
<dbReference type="PhosphoSitePlus" id="E9PVD3"/>
<dbReference type="jPOST" id="E9PVD3"/>
<dbReference type="PaxDb" id="10090-ENSMUSP00000077574"/>
<dbReference type="PeptideAtlas" id="E9PVD3"/>
<dbReference type="ProteomicsDB" id="294341"/>
<dbReference type="Antibodypedia" id="64000">
    <property type="antibodies" value="68 antibodies from 16 providers"/>
</dbReference>
<dbReference type="Ensembl" id="ENSMUST00000078482.13">
    <property type="protein sequence ID" value="ENSMUSP00000077574.6"/>
    <property type="gene ID" value="ENSMUSG00000036862.16"/>
</dbReference>
<dbReference type="GeneID" id="233651"/>
<dbReference type="KEGG" id="mmu:233651"/>
<dbReference type="UCSC" id="uc009izh.2">
    <property type="organism name" value="mouse"/>
</dbReference>
<dbReference type="AGR" id="MGI:2685011"/>
<dbReference type="CTD" id="8642"/>
<dbReference type="MGI" id="MGI:2685011">
    <property type="gene designation" value="Dchs1"/>
</dbReference>
<dbReference type="VEuPathDB" id="HostDB:ENSMUSG00000036862"/>
<dbReference type="eggNOG" id="KOG3594">
    <property type="taxonomic scope" value="Eukaryota"/>
</dbReference>
<dbReference type="GeneTree" id="ENSGT00940000161822"/>
<dbReference type="HOGENOM" id="CLU_000265_2_0_1"/>
<dbReference type="InParanoid" id="E9PVD3"/>
<dbReference type="OMA" id="STCQIRI"/>
<dbReference type="OrthoDB" id="6252479at2759"/>
<dbReference type="PhylomeDB" id="E9PVD3"/>
<dbReference type="TreeFam" id="TF316403"/>
<dbReference type="BioGRID-ORCS" id="233651">
    <property type="hits" value="1 hit in 80 CRISPR screens"/>
</dbReference>
<dbReference type="ChiTaRS" id="Dchs1">
    <property type="organism name" value="mouse"/>
</dbReference>
<dbReference type="PRO" id="PR:E9PVD3"/>
<dbReference type="Proteomes" id="UP000000589">
    <property type="component" value="Chromosome 7"/>
</dbReference>
<dbReference type="RNAct" id="E9PVD3">
    <property type="molecule type" value="protein"/>
</dbReference>
<dbReference type="Bgee" id="ENSMUSG00000036862">
    <property type="expression patterns" value="Expressed in internal carotid artery and 138 other cell types or tissues"/>
</dbReference>
<dbReference type="ExpressionAtlas" id="E9PVD3">
    <property type="expression patterns" value="baseline and differential"/>
</dbReference>
<dbReference type="GO" id="GO:0045177">
    <property type="term" value="C:apical part of cell"/>
    <property type="evidence" value="ECO:0000314"/>
    <property type="project" value="MGI"/>
</dbReference>
<dbReference type="GO" id="GO:0005886">
    <property type="term" value="C:plasma membrane"/>
    <property type="evidence" value="ECO:0007669"/>
    <property type="project" value="UniProtKB-SubCell"/>
</dbReference>
<dbReference type="GO" id="GO:0032991">
    <property type="term" value="C:protein-containing complex"/>
    <property type="evidence" value="ECO:0000247"/>
    <property type="project" value="MGI"/>
</dbReference>
<dbReference type="GO" id="GO:0005509">
    <property type="term" value="F:calcium ion binding"/>
    <property type="evidence" value="ECO:0007669"/>
    <property type="project" value="InterPro"/>
</dbReference>
<dbReference type="GO" id="GO:0009653">
    <property type="term" value="P:anatomical structure morphogenesis"/>
    <property type="evidence" value="ECO:0000315"/>
    <property type="project" value="MGI"/>
</dbReference>
<dbReference type="GO" id="GO:0001658">
    <property type="term" value="P:branching involved in ureteric bud morphogenesis"/>
    <property type="evidence" value="ECO:0000315"/>
    <property type="project" value="MGI"/>
</dbReference>
<dbReference type="GO" id="GO:0016477">
    <property type="term" value="P:cell migration"/>
    <property type="evidence" value="ECO:0000315"/>
    <property type="project" value="MGI"/>
</dbReference>
<dbReference type="GO" id="GO:0003273">
    <property type="term" value="P:cell migration involved in endocardial cushion formation"/>
    <property type="evidence" value="ECO:0007669"/>
    <property type="project" value="Ensembl"/>
</dbReference>
<dbReference type="GO" id="GO:0098609">
    <property type="term" value="P:cell-cell adhesion"/>
    <property type="evidence" value="ECO:0000315"/>
    <property type="project" value="MGI"/>
</dbReference>
<dbReference type="GO" id="GO:0090102">
    <property type="term" value="P:cochlea development"/>
    <property type="evidence" value="ECO:0000315"/>
    <property type="project" value="MGI"/>
</dbReference>
<dbReference type="GO" id="GO:0072137">
    <property type="term" value="P:condensed mesenchymal cell proliferation"/>
    <property type="evidence" value="ECO:0000315"/>
    <property type="project" value="MGI"/>
</dbReference>
<dbReference type="GO" id="GO:0048565">
    <property type="term" value="P:digestive tract development"/>
    <property type="evidence" value="ECO:0000315"/>
    <property type="project" value="MGI"/>
</dbReference>
<dbReference type="GO" id="GO:0001736">
    <property type="term" value="P:establishment of planar polarity"/>
    <property type="evidence" value="ECO:0000305"/>
    <property type="project" value="MGI"/>
</dbReference>
<dbReference type="GO" id="GO:0010467">
    <property type="term" value="P:gene expression"/>
    <property type="evidence" value="ECO:0000315"/>
    <property type="project" value="MGI"/>
</dbReference>
<dbReference type="GO" id="GO:0003007">
    <property type="term" value="P:heart morphogenesis"/>
    <property type="evidence" value="ECO:0000315"/>
    <property type="project" value="MGI"/>
</dbReference>
<dbReference type="GO" id="GO:0007157">
    <property type="term" value="P:heterophilic cell-cell adhesion via plasma membrane cell adhesion molecules"/>
    <property type="evidence" value="ECO:0000314"/>
    <property type="project" value="UniProtKB"/>
</dbReference>
<dbReference type="GO" id="GO:0035329">
    <property type="term" value="P:hippo signaling"/>
    <property type="evidence" value="ECO:0000315"/>
    <property type="project" value="UniProtKB"/>
</dbReference>
<dbReference type="GO" id="GO:0007156">
    <property type="term" value="P:homophilic cell adhesion via plasma membrane adhesion molecules"/>
    <property type="evidence" value="ECO:0007669"/>
    <property type="project" value="InterPro"/>
</dbReference>
<dbReference type="GO" id="GO:0001822">
    <property type="term" value="P:kidney development"/>
    <property type="evidence" value="ECO:0000315"/>
    <property type="project" value="MGI"/>
</dbReference>
<dbReference type="GO" id="GO:0003174">
    <property type="term" value="P:mitral valve development"/>
    <property type="evidence" value="ECO:0000316"/>
    <property type="project" value="MGI"/>
</dbReference>
<dbReference type="GO" id="GO:0003192">
    <property type="term" value="P:mitral valve formation"/>
    <property type="evidence" value="ECO:0007669"/>
    <property type="project" value="Ensembl"/>
</dbReference>
<dbReference type="GO" id="GO:0003183">
    <property type="term" value="P:mitral valve morphogenesis"/>
    <property type="evidence" value="ECO:0000315"/>
    <property type="project" value="MGI"/>
</dbReference>
<dbReference type="GO" id="GO:0072006">
    <property type="term" value="P:nephron development"/>
    <property type="evidence" value="ECO:0000316"/>
    <property type="project" value="MGI"/>
</dbReference>
<dbReference type="GO" id="GO:0021915">
    <property type="term" value="P:neural tube development"/>
    <property type="evidence" value="ECO:0000315"/>
    <property type="project" value="MGI"/>
</dbReference>
<dbReference type="GO" id="GO:0022008">
    <property type="term" value="P:neurogenesis"/>
    <property type="evidence" value="ECO:0000315"/>
    <property type="project" value="UniProtKB"/>
</dbReference>
<dbReference type="GO" id="GO:0043931">
    <property type="term" value="P:ossification involved in bone maturation"/>
    <property type="evidence" value="ECO:0000315"/>
    <property type="project" value="MGI"/>
</dbReference>
<dbReference type="GO" id="GO:0007389">
    <property type="term" value="P:pattern specification process"/>
    <property type="evidence" value="ECO:0000315"/>
    <property type="project" value="MGI"/>
</dbReference>
<dbReference type="GO" id="GO:0036342">
    <property type="term" value="P:post-anal tail morphogenesis"/>
    <property type="evidence" value="ECO:0000315"/>
    <property type="project" value="MGI"/>
</dbReference>
<dbReference type="GO" id="GO:0072659">
    <property type="term" value="P:protein localization to plasma membrane"/>
    <property type="evidence" value="ECO:0000315"/>
    <property type="project" value="MGI"/>
</dbReference>
<dbReference type="GO" id="GO:0032185">
    <property type="term" value="P:septin cytoskeleton organization"/>
    <property type="evidence" value="ECO:0000315"/>
    <property type="project" value="MGI"/>
</dbReference>
<dbReference type="CDD" id="cd11304">
    <property type="entry name" value="Cadherin_repeat"/>
    <property type="match status" value="27"/>
</dbReference>
<dbReference type="FunFam" id="2.60.40.60:FF:000104">
    <property type="entry name" value="cadherin-23 isoform X1"/>
    <property type="match status" value="1"/>
</dbReference>
<dbReference type="FunFam" id="2.60.40.60:FF:000140">
    <property type="entry name" value="Dachsous cadherin-related 1"/>
    <property type="match status" value="1"/>
</dbReference>
<dbReference type="FunFam" id="2.60.40.60:FF:000150">
    <property type="entry name" value="Dachsous cadherin-related 1"/>
    <property type="match status" value="1"/>
</dbReference>
<dbReference type="FunFam" id="2.60.40.60:FF:000158">
    <property type="entry name" value="Dachsous cadherin-related 1"/>
    <property type="match status" value="1"/>
</dbReference>
<dbReference type="FunFam" id="2.60.40.60:FF:000201">
    <property type="entry name" value="Dachsous cadherin-related 1"/>
    <property type="match status" value="1"/>
</dbReference>
<dbReference type="FunFam" id="2.60.40.60:FF:000214">
    <property type="entry name" value="Dachsous cadherin-related 1"/>
    <property type="match status" value="1"/>
</dbReference>
<dbReference type="FunFam" id="2.60.40.60:FF:000225">
    <property type="entry name" value="Dachsous cadherin-related 1"/>
    <property type="match status" value="1"/>
</dbReference>
<dbReference type="FunFam" id="2.60.40.60:FF:000235">
    <property type="entry name" value="Dachsous cadherin-related 1"/>
    <property type="match status" value="1"/>
</dbReference>
<dbReference type="FunFam" id="2.60.40.60:FF:000254">
    <property type="entry name" value="Dachsous cadherin-related 1"/>
    <property type="match status" value="1"/>
</dbReference>
<dbReference type="FunFam" id="2.60.40.60:FF:000020">
    <property type="entry name" value="Dachsous cadherin-related 1b"/>
    <property type="match status" value="10"/>
</dbReference>
<dbReference type="FunFam" id="2.60.40.60:FF:000102">
    <property type="entry name" value="Dachsous cadherin-related 1b"/>
    <property type="match status" value="1"/>
</dbReference>
<dbReference type="FunFam" id="2.60.40.60:FF:000153">
    <property type="entry name" value="Dachsous cadherin-related 2"/>
    <property type="match status" value="1"/>
</dbReference>
<dbReference type="FunFam" id="2.60.40.60:FF:000007">
    <property type="entry name" value="Protocadherin alpha 2"/>
    <property type="match status" value="1"/>
</dbReference>
<dbReference type="FunFam" id="2.60.40.60:FF:000035">
    <property type="entry name" value="Protocadherin Fat 3"/>
    <property type="match status" value="2"/>
</dbReference>
<dbReference type="FunFam" id="2.60.40.60:FF:000081">
    <property type="entry name" value="protocadherin Fat 4"/>
    <property type="match status" value="1"/>
</dbReference>
<dbReference type="FunFam" id="2.60.40.60:FF:000060">
    <property type="entry name" value="Putative cadherin-23"/>
    <property type="match status" value="1"/>
</dbReference>
<dbReference type="Gene3D" id="2.60.40.60">
    <property type="entry name" value="Cadherins"/>
    <property type="match status" value="27"/>
</dbReference>
<dbReference type="InterPro" id="IPR002126">
    <property type="entry name" value="Cadherin-like_dom"/>
</dbReference>
<dbReference type="InterPro" id="IPR015919">
    <property type="entry name" value="Cadherin-like_sf"/>
</dbReference>
<dbReference type="InterPro" id="IPR020894">
    <property type="entry name" value="Cadherin_CS"/>
</dbReference>
<dbReference type="PANTHER" id="PTHR24026">
    <property type="entry name" value="FAT ATYPICAL CADHERIN-RELATED"/>
    <property type="match status" value="1"/>
</dbReference>
<dbReference type="PANTHER" id="PTHR24026:SF126">
    <property type="entry name" value="PROTOCADHERIN FAT 4"/>
    <property type="match status" value="1"/>
</dbReference>
<dbReference type="Pfam" id="PF00028">
    <property type="entry name" value="Cadherin"/>
    <property type="match status" value="23"/>
</dbReference>
<dbReference type="PRINTS" id="PR00205">
    <property type="entry name" value="CADHERIN"/>
</dbReference>
<dbReference type="SMART" id="SM00112">
    <property type="entry name" value="CA"/>
    <property type="match status" value="27"/>
</dbReference>
<dbReference type="SUPFAM" id="SSF49313">
    <property type="entry name" value="Cadherin-like"/>
    <property type="match status" value="27"/>
</dbReference>
<dbReference type="PROSITE" id="PS00232">
    <property type="entry name" value="CADHERIN_1"/>
    <property type="match status" value="18"/>
</dbReference>
<dbReference type="PROSITE" id="PS50268">
    <property type="entry name" value="CADHERIN_2"/>
    <property type="match status" value="27"/>
</dbReference>
<evidence type="ECO:0000250" key="1"/>
<evidence type="ECO:0000255" key="2"/>
<evidence type="ECO:0000255" key="3">
    <source>
        <dbReference type="PROSITE-ProRule" id="PRU00043"/>
    </source>
</evidence>
<evidence type="ECO:0000256" key="4">
    <source>
        <dbReference type="SAM" id="MobiDB-lite"/>
    </source>
</evidence>
<evidence type="ECO:0000269" key="5">
    <source>
    </source>
</evidence>
<evidence type="ECO:0000269" key="6">
    <source>
    </source>
</evidence>
<evidence type="ECO:0000269" key="7">
    <source>
    </source>
</evidence>
<evidence type="ECO:0000269" key="8">
    <source>
    </source>
</evidence>
<evidence type="ECO:0007744" key="9">
    <source>
    </source>
</evidence>
<organism>
    <name type="scientific">Mus musculus</name>
    <name type="common">Mouse</name>
    <dbReference type="NCBI Taxonomy" id="10090"/>
    <lineage>
        <taxon>Eukaryota</taxon>
        <taxon>Metazoa</taxon>
        <taxon>Chordata</taxon>
        <taxon>Craniata</taxon>
        <taxon>Vertebrata</taxon>
        <taxon>Euteleostomi</taxon>
        <taxon>Mammalia</taxon>
        <taxon>Eutheria</taxon>
        <taxon>Euarchontoglires</taxon>
        <taxon>Glires</taxon>
        <taxon>Rodentia</taxon>
        <taxon>Myomorpha</taxon>
        <taxon>Muroidea</taxon>
        <taxon>Muridae</taxon>
        <taxon>Murinae</taxon>
        <taxon>Mus</taxon>
        <taxon>Mus</taxon>
    </lineage>
</organism>
<gene>
    <name type="primary">Dchs1</name>
</gene>
<protein>
    <recommendedName>
        <fullName>Protocadherin-16</fullName>
    </recommendedName>
    <alternativeName>
        <fullName>Protein Dchs1</fullName>
    </alternativeName>
    <alternativeName>
        <fullName>Protein dachsous homolog 1</fullName>
    </alternativeName>
</protein>